<proteinExistence type="inferred from homology"/>
<sequence>MIIAVDGMGGDFAPYAVVEGIIEAVKEQDINIIITGKKELIEAELKKYEYEREKIRILDTREVITTSESPVMALRRKKDSSLVKALQLVKEGKADAAISAGSTGALMSGATLIVGRIKGIERVALAPMIPGKNGAFMIIDAGANVDCKPHYLLQFSLMGKIYFENVLKIKEPSIGLVNIGTEEEKGNELTKNTYKLLKDMDFNFVGNVEPREATNGDVNILVCDGFVGNTILKTYEGVSLNLIHMIKEEIMKSTTSKLAGVFLKPVFKKIKSRLDYSEYGGSAFLGCKGICVKAHGSSNGKAFKNAIKQAVICYDNKVIDKIKFEIEKIYNREE</sequence>
<evidence type="ECO:0000255" key="1">
    <source>
        <dbReference type="HAMAP-Rule" id="MF_00019"/>
    </source>
</evidence>
<reference key="1">
    <citation type="submission" date="2005-09" db="EMBL/GenBank/DDBJ databases">
        <title>Complete genome sequence of Clostridium kluyveri and comparative genomics of Clostridia species.</title>
        <authorList>
            <person name="Inui M."/>
            <person name="Nonaka H."/>
            <person name="Shinoda Y."/>
            <person name="Ikenaga Y."/>
            <person name="Abe M."/>
            <person name="Naito K."/>
            <person name="Vertes A.A."/>
            <person name="Yukawa H."/>
        </authorList>
    </citation>
    <scope>NUCLEOTIDE SEQUENCE [LARGE SCALE GENOMIC DNA]</scope>
    <source>
        <strain>NBRC 12016</strain>
    </source>
</reference>
<keyword id="KW-0963">Cytoplasm</keyword>
<keyword id="KW-0444">Lipid biosynthesis</keyword>
<keyword id="KW-0443">Lipid metabolism</keyword>
<keyword id="KW-0594">Phospholipid biosynthesis</keyword>
<keyword id="KW-1208">Phospholipid metabolism</keyword>
<keyword id="KW-0808">Transferase</keyword>
<organism>
    <name type="scientific">Clostridium kluyveri (strain NBRC 12016)</name>
    <dbReference type="NCBI Taxonomy" id="583346"/>
    <lineage>
        <taxon>Bacteria</taxon>
        <taxon>Bacillati</taxon>
        <taxon>Bacillota</taxon>
        <taxon>Clostridia</taxon>
        <taxon>Eubacteriales</taxon>
        <taxon>Clostridiaceae</taxon>
        <taxon>Clostridium</taxon>
    </lineage>
</organism>
<gene>
    <name evidence="1" type="primary">plsX</name>
    <name type="ordered locus">CKR_1290</name>
</gene>
<dbReference type="EC" id="2.3.1.274" evidence="1"/>
<dbReference type="EMBL" id="AP009049">
    <property type="protein sequence ID" value="BAH06341.1"/>
    <property type="molecule type" value="Genomic_DNA"/>
</dbReference>
<dbReference type="RefSeq" id="WP_012101783.1">
    <property type="nucleotide sequence ID" value="NC_011837.1"/>
</dbReference>
<dbReference type="SMR" id="B9E1G6"/>
<dbReference type="KEGG" id="ckr:CKR_1290"/>
<dbReference type="HOGENOM" id="CLU_039379_1_1_9"/>
<dbReference type="UniPathway" id="UPA00085"/>
<dbReference type="Proteomes" id="UP000007969">
    <property type="component" value="Chromosome"/>
</dbReference>
<dbReference type="GO" id="GO:0005737">
    <property type="term" value="C:cytoplasm"/>
    <property type="evidence" value="ECO:0007669"/>
    <property type="project" value="UniProtKB-SubCell"/>
</dbReference>
<dbReference type="GO" id="GO:0043811">
    <property type="term" value="F:phosphate:acyl-[acyl carrier protein] acyltransferase activity"/>
    <property type="evidence" value="ECO:0007669"/>
    <property type="project" value="UniProtKB-UniRule"/>
</dbReference>
<dbReference type="GO" id="GO:0006633">
    <property type="term" value="P:fatty acid biosynthetic process"/>
    <property type="evidence" value="ECO:0007669"/>
    <property type="project" value="UniProtKB-UniRule"/>
</dbReference>
<dbReference type="GO" id="GO:0008654">
    <property type="term" value="P:phospholipid biosynthetic process"/>
    <property type="evidence" value="ECO:0007669"/>
    <property type="project" value="UniProtKB-KW"/>
</dbReference>
<dbReference type="Gene3D" id="3.40.718.10">
    <property type="entry name" value="Isopropylmalate Dehydrogenase"/>
    <property type="match status" value="1"/>
</dbReference>
<dbReference type="HAMAP" id="MF_00019">
    <property type="entry name" value="PlsX"/>
    <property type="match status" value="1"/>
</dbReference>
<dbReference type="InterPro" id="IPR003664">
    <property type="entry name" value="FA_synthesis"/>
</dbReference>
<dbReference type="InterPro" id="IPR012281">
    <property type="entry name" value="Phospholipid_synth_PlsX-like"/>
</dbReference>
<dbReference type="NCBIfam" id="TIGR00182">
    <property type="entry name" value="plsX"/>
    <property type="match status" value="1"/>
</dbReference>
<dbReference type="PANTHER" id="PTHR30100">
    <property type="entry name" value="FATTY ACID/PHOSPHOLIPID SYNTHESIS PROTEIN PLSX"/>
    <property type="match status" value="1"/>
</dbReference>
<dbReference type="PANTHER" id="PTHR30100:SF1">
    <property type="entry name" value="PHOSPHATE ACYLTRANSFERASE"/>
    <property type="match status" value="1"/>
</dbReference>
<dbReference type="Pfam" id="PF02504">
    <property type="entry name" value="FA_synthesis"/>
    <property type="match status" value="1"/>
</dbReference>
<dbReference type="PIRSF" id="PIRSF002465">
    <property type="entry name" value="Phsphlp_syn_PlsX"/>
    <property type="match status" value="1"/>
</dbReference>
<dbReference type="SUPFAM" id="SSF53659">
    <property type="entry name" value="Isocitrate/Isopropylmalate dehydrogenase-like"/>
    <property type="match status" value="1"/>
</dbReference>
<accession>B9E1G6</accession>
<name>PLSX_CLOK1</name>
<comment type="function">
    <text evidence="1">Catalyzes the reversible formation of acyl-phosphate (acyl-PO(4)) from acyl-[acyl-carrier-protein] (acyl-ACP). This enzyme utilizes acyl-ACP as fatty acyl donor, but not acyl-CoA.</text>
</comment>
<comment type="catalytic activity">
    <reaction evidence="1">
        <text>a fatty acyl-[ACP] + phosphate = an acyl phosphate + holo-[ACP]</text>
        <dbReference type="Rhea" id="RHEA:42292"/>
        <dbReference type="Rhea" id="RHEA-COMP:9685"/>
        <dbReference type="Rhea" id="RHEA-COMP:14125"/>
        <dbReference type="ChEBI" id="CHEBI:43474"/>
        <dbReference type="ChEBI" id="CHEBI:59918"/>
        <dbReference type="ChEBI" id="CHEBI:64479"/>
        <dbReference type="ChEBI" id="CHEBI:138651"/>
        <dbReference type="EC" id="2.3.1.274"/>
    </reaction>
</comment>
<comment type="pathway">
    <text evidence="1">Lipid metabolism; phospholipid metabolism.</text>
</comment>
<comment type="subunit">
    <text evidence="1">Homodimer. Probably interacts with PlsY.</text>
</comment>
<comment type="subcellular location">
    <subcellularLocation>
        <location evidence="1">Cytoplasm</location>
    </subcellularLocation>
    <text evidence="1">Associated with the membrane possibly through PlsY.</text>
</comment>
<comment type="similarity">
    <text evidence="1">Belongs to the PlsX family.</text>
</comment>
<protein>
    <recommendedName>
        <fullName evidence="1">Phosphate acyltransferase</fullName>
        <ecNumber evidence="1">2.3.1.274</ecNumber>
    </recommendedName>
    <alternativeName>
        <fullName evidence="1">Acyl-ACP phosphotransacylase</fullName>
    </alternativeName>
    <alternativeName>
        <fullName evidence="1">Acyl-[acyl-carrier-protein]--phosphate acyltransferase</fullName>
    </alternativeName>
    <alternativeName>
        <fullName evidence="1">Phosphate-acyl-ACP acyltransferase</fullName>
    </alternativeName>
</protein>
<feature type="chain" id="PRO_1000193131" description="Phosphate acyltransferase">
    <location>
        <begin position="1"/>
        <end position="334"/>
    </location>
</feature>